<evidence type="ECO:0000250" key="1"/>
<evidence type="ECO:0000250" key="2">
    <source>
        <dbReference type="UniProtKB" id="Q8U4K3"/>
    </source>
</evidence>
<evidence type="ECO:0000255" key="3">
    <source>
        <dbReference type="PROSITE-ProRule" id="PRU00434"/>
    </source>
</evidence>
<evidence type="ECO:0000305" key="4"/>
<accession>Q58762</accession>
<keyword id="KW-0067">ATP-binding</keyword>
<keyword id="KW-1003">Cell membrane</keyword>
<keyword id="KW-0472">Membrane</keyword>
<keyword id="KW-0500">Molybdenum</keyword>
<keyword id="KW-0547">Nucleotide-binding</keyword>
<keyword id="KW-1185">Reference proteome</keyword>
<keyword id="KW-1278">Translocase</keyword>
<keyword id="KW-0813">Transport</keyword>
<protein>
    <recommendedName>
        <fullName>Molybdate/tungstate import ATP-binding protein WtpC</fullName>
        <ecNumber evidence="2">7.3.2.6</ecNumber>
    </recommendedName>
</protein>
<dbReference type="EC" id="7.3.2.6" evidence="2"/>
<dbReference type="EMBL" id="L77117">
    <property type="protein sequence ID" value="AAB99375.1"/>
    <property type="molecule type" value="Genomic_DNA"/>
</dbReference>
<dbReference type="PIR" id="F64470">
    <property type="entry name" value="F64470"/>
</dbReference>
<dbReference type="RefSeq" id="WP_010870884.1">
    <property type="nucleotide sequence ID" value="NC_000909.1"/>
</dbReference>
<dbReference type="SMR" id="Q58762"/>
<dbReference type="FunCoup" id="Q58762">
    <property type="interactions" value="41"/>
</dbReference>
<dbReference type="STRING" id="243232.MJ_1367"/>
<dbReference type="TCDB" id="3.A.1.6.9">
    <property type="family name" value="the atp-binding cassette (abc) superfamily"/>
</dbReference>
<dbReference type="PaxDb" id="243232-MJ_1367"/>
<dbReference type="EnsemblBacteria" id="AAB99375">
    <property type="protein sequence ID" value="AAB99375"/>
    <property type="gene ID" value="MJ_1367"/>
</dbReference>
<dbReference type="GeneID" id="1452270"/>
<dbReference type="KEGG" id="mja:MJ_1367"/>
<dbReference type="eggNOG" id="arCOG00175">
    <property type="taxonomic scope" value="Archaea"/>
</dbReference>
<dbReference type="HOGENOM" id="CLU_000604_1_1_2"/>
<dbReference type="InParanoid" id="Q58762"/>
<dbReference type="OrthoDB" id="18368at2157"/>
<dbReference type="PhylomeDB" id="Q58762"/>
<dbReference type="Proteomes" id="UP000000805">
    <property type="component" value="Chromosome"/>
</dbReference>
<dbReference type="GO" id="GO:0005886">
    <property type="term" value="C:plasma membrane"/>
    <property type="evidence" value="ECO:0007669"/>
    <property type="project" value="UniProtKB-SubCell"/>
</dbReference>
<dbReference type="GO" id="GO:1901238">
    <property type="term" value="F:ABC-type tungstate transporter activity"/>
    <property type="evidence" value="ECO:0007669"/>
    <property type="project" value="UniProtKB-EC"/>
</dbReference>
<dbReference type="GO" id="GO:0005524">
    <property type="term" value="F:ATP binding"/>
    <property type="evidence" value="ECO:0007669"/>
    <property type="project" value="UniProtKB-KW"/>
</dbReference>
<dbReference type="GO" id="GO:0016887">
    <property type="term" value="F:ATP hydrolysis activity"/>
    <property type="evidence" value="ECO:0007669"/>
    <property type="project" value="InterPro"/>
</dbReference>
<dbReference type="CDD" id="cd03299">
    <property type="entry name" value="ABC_ModC_like"/>
    <property type="match status" value="1"/>
</dbReference>
<dbReference type="Gene3D" id="3.40.50.300">
    <property type="entry name" value="P-loop containing nucleotide triphosphate hydrolases"/>
    <property type="match status" value="1"/>
</dbReference>
<dbReference type="InterPro" id="IPR003593">
    <property type="entry name" value="AAA+_ATPase"/>
</dbReference>
<dbReference type="InterPro" id="IPR050093">
    <property type="entry name" value="ABC_SmlMolc_Importer"/>
</dbReference>
<dbReference type="InterPro" id="IPR003439">
    <property type="entry name" value="ABC_transporter-like_ATP-bd"/>
</dbReference>
<dbReference type="InterPro" id="IPR017871">
    <property type="entry name" value="ABC_transporter-like_CS"/>
</dbReference>
<dbReference type="InterPro" id="IPR027417">
    <property type="entry name" value="P-loop_NTPase"/>
</dbReference>
<dbReference type="PANTHER" id="PTHR42781">
    <property type="entry name" value="SPERMIDINE/PUTRESCINE IMPORT ATP-BINDING PROTEIN POTA"/>
    <property type="match status" value="1"/>
</dbReference>
<dbReference type="PANTHER" id="PTHR42781:SF4">
    <property type="entry name" value="SPERMIDINE_PUTRESCINE IMPORT ATP-BINDING PROTEIN POTA"/>
    <property type="match status" value="1"/>
</dbReference>
<dbReference type="Pfam" id="PF00005">
    <property type="entry name" value="ABC_tran"/>
    <property type="match status" value="1"/>
</dbReference>
<dbReference type="SMART" id="SM00382">
    <property type="entry name" value="AAA"/>
    <property type="match status" value="1"/>
</dbReference>
<dbReference type="SUPFAM" id="SSF52540">
    <property type="entry name" value="P-loop containing nucleoside triphosphate hydrolases"/>
    <property type="match status" value="1"/>
</dbReference>
<dbReference type="PROSITE" id="PS00211">
    <property type="entry name" value="ABC_TRANSPORTER_1"/>
    <property type="match status" value="1"/>
</dbReference>
<dbReference type="PROSITE" id="PS50893">
    <property type="entry name" value="ABC_TRANSPORTER_2"/>
    <property type="match status" value="1"/>
</dbReference>
<proteinExistence type="inferred from homology"/>
<comment type="function">
    <text evidence="2">Part of the ABC transporter complex WtpABC involved in molybdate/tungstate import. Responsible for energy coupling to the transport system.</text>
</comment>
<comment type="catalytic activity">
    <reaction evidence="2">
        <text>tungstate(in) + ATP + H2O = tungstate(out) + ADP + phosphate + H(+)</text>
        <dbReference type="Rhea" id="RHEA:35027"/>
        <dbReference type="ChEBI" id="CHEBI:15377"/>
        <dbReference type="ChEBI" id="CHEBI:15378"/>
        <dbReference type="ChEBI" id="CHEBI:30616"/>
        <dbReference type="ChEBI" id="CHEBI:43474"/>
        <dbReference type="ChEBI" id="CHEBI:46502"/>
        <dbReference type="ChEBI" id="CHEBI:456216"/>
        <dbReference type="EC" id="7.3.2.6"/>
    </reaction>
</comment>
<comment type="subunit">
    <text evidence="1">The complex is composed of two ATP-binding proteins (WtpC), two transmembrane proteins (WtpB) and a solute-binding protein (WtpA).</text>
</comment>
<comment type="subcellular location">
    <subcellularLocation>
        <location evidence="1">Cell membrane</location>
        <topology evidence="1">Peripheral membrane protein</topology>
    </subcellularLocation>
</comment>
<comment type="similarity">
    <text evidence="4">Belongs to the ABC transporter superfamily. Sulfate/tungstate importer (TC 3.A.1.6) family.</text>
</comment>
<feature type="chain" id="PRO_0000093225" description="Molybdate/tungstate import ATP-binding protein WtpC">
    <location>
        <begin position="1"/>
        <end position="297"/>
    </location>
</feature>
<feature type="domain" description="ABC transporter" evidence="3">
    <location>
        <begin position="2"/>
        <end position="226"/>
    </location>
</feature>
<feature type="binding site" evidence="3">
    <location>
        <begin position="32"/>
        <end position="39"/>
    </location>
    <ligand>
        <name>ATP</name>
        <dbReference type="ChEBI" id="CHEBI:30616"/>
    </ligand>
</feature>
<organism>
    <name type="scientific">Methanocaldococcus jannaschii (strain ATCC 43067 / DSM 2661 / JAL-1 / JCM 10045 / NBRC 100440)</name>
    <name type="common">Methanococcus jannaschii</name>
    <dbReference type="NCBI Taxonomy" id="243232"/>
    <lineage>
        <taxon>Archaea</taxon>
        <taxon>Methanobacteriati</taxon>
        <taxon>Methanobacteriota</taxon>
        <taxon>Methanomada group</taxon>
        <taxon>Methanococci</taxon>
        <taxon>Methanococcales</taxon>
        <taxon>Methanocaldococcaceae</taxon>
        <taxon>Methanocaldococcus</taxon>
    </lineage>
</organism>
<reference key="1">
    <citation type="journal article" date="1996" name="Science">
        <title>Complete genome sequence of the methanogenic archaeon, Methanococcus jannaschii.</title>
        <authorList>
            <person name="Bult C.J."/>
            <person name="White O."/>
            <person name="Olsen G.J."/>
            <person name="Zhou L."/>
            <person name="Fleischmann R.D."/>
            <person name="Sutton G.G."/>
            <person name="Blake J.A."/>
            <person name="FitzGerald L.M."/>
            <person name="Clayton R.A."/>
            <person name="Gocayne J.D."/>
            <person name="Kerlavage A.R."/>
            <person name="Dougherty B.A."/>
            <person name="Tomb J.-F."/>
            <person name="Adams M.D."/>
            <person name="Reich C.I."/>
            <person name="Overbeek R."/>
            <person name="Kirkness E.F."/>
            <person name="Weinstock K.G."/>
            <person name="Merrick J.M."/>
            <person name="Glodek A."/>
            <person name="Scott J.L."/>
            <person name="Geoghagen N.S.M."/>
            <person name="Weidman J.F."/>
            <person name="Fuhrmann J.L."/>
            <person name="Nguyen D."/>
            <person name="Utterback T.R."/>
            <person name="Kelley J.M."/>
            <person name="Peterson J.D."/>
            <person name="Sadow P.W."/>
            <person name="Hanna M.C."/>
            <person name="Cotton M.D."/>
            <person name="Roberts K.M."/>
            <person name="Hurst M.A."/>
            <person name="Kaine B.P."/>
            <person name="Borodovsky M."/>
            <person name="Klenk H.-P."/>
            <person name="Fraser C.M."/>
            <person name="Smith H.O."/>
            <person name="Woese C.R."/>
            <person name="Venter J.C."/>
        </authorList>
    </citation>
    <scope>NUCLEOTIDE SEQUENCE [LARGE SCALE GENOMIC DNA]</scope>
    <source>
        <strain>ATCC 43067 / DSM 2661 / JAL-1 / JCM 10045 / NBRC 100440</strain>
    </source>
</reference>
<name>WTPC_METJA</name>
<gene>
    <name type="primary">wtpC</name>
    <name type="ordered locus">MJ1367</name>
</gene>
<sequence length="297" mass="33266">MLKVNNLSKIWKDFKLKNVSFEIDREYCVILGPSGAGKSVLIKCIAGILKPDSGRIILNGEDITNLPPEKRNVGYVPQNYALFPNKNVYKNIAYGLIIKKVNKLEIDRKVKEIAEFLNISHLLNRDVKTLSGGEQQRVALARALILNPSILLLDEPTSAVDIKIKESIISELKKIKHIPVLHITHDLAEARTLGEKVGIFMNGELIAFGDKSILKKPKNKKVAEFLGFNIIDDKAIAPEDVIIKDGNGGEVVNIIDYGKYKKVFVKYNGYIIKAFTERDLNIGDNVGLEFREQTKLT</sequence>